<organism>
    <name type="scientific">Trypanosoma brucei brucei</name>
    <dbReference type="NCBI Taxonomy" id="5702"/>
    <lineage>
        <taxon>Eukaryota</taxon>
        <taxon>Discoba</taxon>
        <taxon>Euglenozoa</taxon>
        <taxon>Kinetoplastea</taxon>
        <taxon>Metakinetoplastina</taxon>
        <taxon>Trypanosomatida</taxon>
        <taxon>Trypanosomatidae</taxon>
        <taxon>Trypanosoma</taxon>
    </lineage>
</organism>
<reference key="1">
    <citation type="journal article" date="1991" name="J. Mol. Biol.">
        <title>Variant specific glycoprotein of Trypanosoma brucei consists of two domains each having an independently conserved pattern of cysteine residues.</title>
        <authorList>
            <person name="Carrington M."/>
            <person name="Miller N."/>
            <person name="Blum M.L."/>
            <person name="Roditi I."/>
            <person name="Wiley D.C."/>
            <person name="Turner M.J."/>
        </authorList>
    </citation>
    <scope>NUCLEOTIDE SEQUENCE [MRNA]</scope>
    <source>
        <strain>Isolate MIAG 118</strain>
    </source>
</reference>
<protein>
    <recommendedName>
        <fullName>Variant surface glycoprotein MITAT 1.5</fullName>
    </recommendedName>
    <alternativeName>
        <fullName>VSG 118</fullName>
    </alternativeName>
</protein>
<keyword id="KW-1003">Cell membrane</keyword>
<keyword id="KW-1015">Disulfide bond</keyword>
<keyword id="KW-0325">Glycoprotein</keyword>
<keyword id="KW-0336">GPI-anchor</keyword>
<keyword id="KW-0449">Lipoprotein</keyword>
<keyword id="KW-0472">Membrane</keyword>
<keyword id="KW-0732">Signal</keyword>
<keyword id="KW-0821">Trypanosomiasis</keyword>
<comment type="function">
    <text>VSG forms a coat on the surface of the parasite. The trypanosome evades the immune response of the host by expressing a series of antigenically distinct VSGs from an estimated 1000 VSG genes.</text>
</comment>
<comment type="subcellular location">
    <subcellularLocation>
        <location>Cell membrane</location>
        <topology>Lipid-anchor</topology>
        <topology>GPI-anchor</topology>
    </subcellularLocation>
    <text evidence="1">A soluble form is released from ruptured cells by the action of a PI-PLC.</text>
</comment>
<name>VSM5_TRYBB</name>
<evidence type="ECO:0000250" key="1"/>
<evidence type="ECO:0000255" key="2"/>
<evidence type="ECO:0000256" key="3">
    <source>
        <dbReference type="SAM" id="MobiDB-lite"/>
    </source>
</evidence>
<feature type="signal peptide">
    <location>
        <begin position="1"/>
        <end position="22"/>
    </location>
</feature>
<feature type="chain" id="PRO_0000036437" description="Variant surface glycoprotein MITAT 1.5">
    <location>
        <begin position="23"/>
        <end position="451"/>
    </location>
</feature>
<feature type="propeptide" id="PRO_0000036438" description="Removed in mature form" evidence="2">
    <location>
        <begin position="452"/>
        <end position="474"/>
    </location>
</feature>
<feature type="region of interest" description="Disordered" evidence="3">
    <location>
        <begin position="388"/>
        <end position="449"/>
    </location>
</feature>
<feature type="compositionally biased region" description="Basic and acidic residues" evidence="3">
    <location>
        <begin position="414"/>
        <end position="423"/>
    </location>
</feature>
<feature type="compositionally biased region" description="Basic and acidic residues" evidence="3">
    <location>
        <begin position="435"/>
        <end position="449"/>
    </location>
</feature>
<feature type="lipid moiety-binding region" description="GPI-anchor amidated asparagine" evidence="2">
    <location>
        <position position="451"/>
    </location>
</feature>
<feature type="glycosylation site" description="N-linked (GlcNAc...) asparagine" evidence="2">
    <location>
        <position position="74"/>
    </location>
</feature>
<feature type="glycosylation site" description="N-linked (GlcNAc...) asparagine" evidence="2">
    <location>
        <position position="95"/>
    </location>
</feature>
<feature type="glycosylation site" description="N-linked (GlcNAc...) asparagine" evidence="2">
    <location>
        <position position="329"/>
    </location>
</feature>
<feature type="disulfide bond" evidence="1">
    <location>
        <begin position="37"/>
        <end position="161"/>
    </location>
</feature>
<feature type="disulfide bond" evidence="1">
    <location>
        <begin position="144"/>
        <end position="214"/>
    </location>
</feature>
<dbReference type="EMBL" id="X56763">
    <property type="protein sequence ID" value="CAA40082.1"/>
    <property type="molecule type" value="mRNA"/>
</dbReference>
<dbReference type="PIR" id="S18452">
    <property type="entry name" value="S18452"/>
</dbReference>
<dbReference type="SMR" id="P26333"/>
<dbReference type="ABCD" id="P26333">
    <property type="antibodies" value="5 sequenced antibodies"/>
</dbReference>
<dbReference type="GO" id="GO:0005886">
    <property type="term" value="C:plasma membrane"/>
    <property type="evidence" value="ECO:0007669"/>
    <property type="project" value="UniProtKB-SubCell"/>
</dbReference>
<dbReference type="GO" id="GO:0098552">
    <property type="term" value="C:side of membrane"/>
    <property type="evidence" value="ECO:0007669"/>
    <property type="project" value="UniProtKB-KW"/>
</dbReference>
<dbReference type="GO" id="GO:0042783">
    <property type="term" value="P:symbiont-mediated evasion of host immune response"/>
    <property type="evidence" value="ECO:0007669"/>
    <property type="project" value="InterPro"/>
</dbReference>
<dbReference type="Gene3D" id="3.90.150.10">
    <property type="entry name" value="Variant Surface Glycoprotein, subunit A domain 1"/>
    <property type="match status" value="1"/>
</dbReference>
<dbReference type="InterPro" id="IPR001812">
    <property type="entry name" value="Trypano_VSG_A_N_dom"/>
</dbReference>
<dbReference type="InterPro" id="IPR019609">
    <property type="entry name" value="Variant_surf_glycoprt_trypan_C"/>
</dbReference>
<dbReference type="Pfam" id="PF00913">
    <property type="entry name" value="Trypan_glycop"/>
    <property type="match status" value="1"/>
</dbReference>
<dbReference type="Pfam" id="PF10659">
    <property type="entry name" value="Trypan_glycop_C"/>
    <property type="match status" value="1"/>
</dbReference>
<dbReference type="SUPFAM" id="SSF58087">
    <property type="entry name" value="Variant surface glycoprotein (N-terminal domain)"/>
    <property type="match status" value="1"/>
</dbReference>
<accession>P26333</accession>
<proteinExistence type="evidence at transcript level"/>
<sequence>MIHSNKVATVVLALISSWPADGTNNHGLKLQKAQAICKMSKELKATAMRAANDAKLKITEILELENVFAAMIPNATKGTEADGCTDYNAVFLEANNTAAETVSKIATLAESATKAAGAAGRAAGVLDEFIAALAQAQGATGLYCIQGSGTGAATHTELADCFNGDLKPRNMLSIRDPKVSAAATGSTDLTTLAKAMAASGTDTTFHGDQQSKGCGLMKGTSDGIMIGQALTGTFAWAQGLLRFGALGANGIASTGVTGYAHTATASGNGVHWASDPEKIPVIAEAIALVSNYNTLADSIGTRAKDAIEKVKKCMKATNKEIKREHIFLNVSHLNRELQKAVTELDKALNKQDAKAEAKQQPNCDDKKQIECGDTPGCGWHKAEGKCEAKDGEGQKNQATGEKDANKNRCTQHGTNKEACEKENTPGQSAVCGFRKGKDGETDEPDKEKCRNGSFLTSKQFAFSVVSAAFMALLF</sequence>